<proteinExistence type="evidence at transcript level"/>
<organism>
    <name type="scientific">Oryza sativa subsp. japonica</name>
    <name type="common">Rice</name>
    <dbReference type="NCBI Taxonomy" id="39947"/>
    <lineage>
        <taxon>Eukaryota</taxon>
        <taxon>Viridiplantae</taxon>
        <taxon>Streptophyta</taxon>
        <taxon>Embryophyta</taxon>
        <taxon>Tracheophyta</taxon>
        <taxon>Spermatophyta</taxon>
        <taxon>Magnoliopsida</taxon>
        <taxon>Liliopsida</taxon>
        <taxon>Poales</taxon>
        <taxon>Poaceae</taxon>
        <taxon>BOP clade</taxon>
        <taxon>Oryzoideae</taxon>
        <taxon>Oryzeae</taxon>
        <taxon>Oryzinae</taxon>
        <taxon>Oryza</taxon>
        <taxon>Oryza sativa</taxon>
    </lineage>
</organism>
<name>BGL31_ORYSJ</name>
<evidence type="ECO:0000250" key="1">
    <source>
        <dbReference type="UniProtKB" id="Q1XH05"/>
    </source>
</evidence>
<evidence type="ECO:0000250" key="2">
    <source>
        <dbReference type="UniProtKB" id="Q75I94"/>
    </source>
</evidence>
<evidence type="ECO:0000250" key="3">
    <source>
        <dbReference type="UniProtKB" id="Q7XSK0"/>
    </source>
</evidence>
<evidence type="ECO:0000250" key="4">
    <source>
        <dbReference type="UniProtKB" id="Q8L7J2"/>
    </source>
</evidence>
<evidence type="ECO:0000250" key="5">
    <source>
        <dbReference type="UniProtKB" id="Q9SPP9"/>
    </source>
</evidence>
<evidence type="ECO:0000255" key="6"/>
<evidence type="ECO:0000255" key="7">
    <source>
        <dbReference type="PROSITE-ProRule" id="PRU00498"/>
    </source>
</evidence>
<evidence type="ECO:0000305" key="8"/>
<reference key="1">
    <citation type="journal article" date="2005" name="Nature">
        <title>The map-based sequence of the rice genome.</title>
        <authorList>
            <consortium name="International rice genome sequencing project (IRGSP)"/>
        </authorList>
    </citation>
    <scope>NUCLEOTIDE SEQUENCE [LARGE SCALE GENOMIC DNA]</scope>
    <source>
        <strain>cv. Nipponbare</strain>
    </source>
</reference>
<reference key="2">
    <citation type="journal article" date="2008" name="Nucleic Acids Res.">
        <title>The rice annotation project database (RAP-DB): 2008 update.</title>
        <authorList>
            <consortium name="The rice annotation project (RAP)"/>
        </authorList>
    </citation>
    <scope>GENOME REANNOTATION</scope>
    <source>
        <strain>cv. Nipponbare</strain>
    </source>
</reference>
<reference key="3">
    <citation type="journal article" date="2013" name="Rice">
        <title>Improvement of the Oryza sativa Nipponbare reference genome using next generation sequence and optical map data.</title>
        <authorList>
            <person name="Kawahara Y."/>
            <person name="de la Bastide M."/>
            <person name="Hamilton J.P."/>
            <person name="Kanamori H."/>
            <person name="McCombie W.R."/>
            <person name="Ouyang S."/>
            <person name="Schwartz D.C."/>
            <person name="Tanaka T."/>
            <person name="Wu J."/>
            <person name="Zhou S."/>
            <person name="Childs K.L."/>
            <person name="Davidson R.M."/>
            <person name="Lin H."/>
            <person name="Quesada-Ocampo L."/>
            <person name="Vaillancourt B."/>
            <person name="Sakai H."/>
            <person name="Lee S.S."/>
            <person name="Kim J."/>
            <person name="Numa H."/>
            <person name="Itoh T."/>
            <person name="Buell C.R."/>
            <person name="Matsumoto T."/>
        </authorList>
    </citation>
    <scope>GENOME REANNOTATION</scope>
    <source>
        <strain>cv. Nipponbare</strain>
    </source>
</reference>
<reference key="4">
    <citation type="journal article" date="2005" name="PLoS Biol.">
        <title>The genomes of Oryza sativa: a history of duplications.</title>
        <authorList>
            <person name="Yu J."/>
            <person name="Wang J."/>
            <person name="Lin W."/>
            <person name="Li S."/>
            <person name="Li H."/>
            <person name="Zhou J."/>
            <person name="Ni P."/>
            <person name="Dong W."/>
            <person name="Hu S."/>
            <person name="Zeng C."/>
            <person name="Zhang J."/>
            <person name="Zhang Y."/>
            <person name="Li R."/>
            <person name="Xu Z."/>
            <person name="Li S."/>
            <person name="Li X."/>
            <person name="Zheng H."/>
            <person name="Cong L."/>
            <person name="Lin L."/>
            <person name="Yin J."/>
            <person name="Geng J."/>
            <person name="Li G."/>
            <person name="Shi J."/>
            <person name="Liu J."/>
            <person name="Lv H."/>
            <person name="Li J."/>
            <person name="Wang J."/>
            <person name="Deng Y."/>
            <person name="Ran L."/>
            <person name="Shi X."/>
            <person name="Wang X."/>
            <person name="Wu Q."/>
            <person name="Li C."/>
            <person name="Ren X."/>
            <person name="Wang J."/>
            <person name="Wang X."/>
            <person name="Li D."/>
            <person name="Liu D."/>
            <person name="Zhang X."/>
            <person name="Ji Z."/>
            <person name="Zhao W."/>
            <person name="Sun Y."/>
            <person name="Zhang Z."/>
            <person name="Bao J."/>
            <person name="Han Y."/>
            <person name="Dong L."/>
            <person name="Ji J."/>
            <person name="Chen P."/>
            <person name="Wu S."/>
            <person name="Liu J."/>
            <person name="Xiao Y."/>
            <person name="Bu D."/>
            <person name="Tan J."/>
            <person name="Yang L."/>
            <person name="Ye C."/>
            <person name="Zhang J."/>
            <person name="Xu J."/>
            <person name="Zhou Y."/>
            <person name="Yu Y."/>
            <person name="Zhang B."/>
            <person name="Zhuang S."/>
            <person name="Wei H."/>
            <person name="Liu B."/>
            <person name="Lei M."/>
            <person name="Yu H."/>
            <person name="Li Y."/>
            <person name="Xu H."/>
            <person name="Wei S."/>
            <person name="He X."/>
            <person name="Fang L."/>
            <person name="Zhang Z."/>
            <person name="Zhang Y."/>
            <person name="Huang X."/>
            <person name="Su Z."/>
            <person name="Tong W."/>
            <person name="Li J."/>
            <person name="Tong Z."/>
            <person name="Li S."/>
            <person name="Ye J."/>
            <person name="Wang L."/>
            <person name="Fang L."/>
            <person name="Lei T."/>
            <person name="Chen C.-S."/>
            <person name="Chen H.-C."/>
            <person name="Xu Z."/>
            <person name="Li H."/>
            <person name="Huang H."/>
            <person name="Zhang F."/>
            <person name="Xu H."/>
            <person name="Li N."/>
            <person name="Zhao C."/>
            <person name="Li S."/>
            <person name="Dong L."/>
            <person name="Huang Y."/>
            <person name="Li L."/>
            <person name="Xi Y."/>
            <person name="Qi Q."/>
            <person name="Li W."/>
            <person name="Zhang B."/>
            <person name="Hu W."/>
            <person name="Zhang Y."/>
            <person name="Tian X."/>
            <person name="Jiao Y."/>
            <person name="Liang X."/>
            <person name="Jin J."/>
            <person name="Gao L."/>
            <person name="Zheng W."/>
            <person name="Hao B."/>
            <person name="Liu S.-M."/>
            <person name="Wang W."/>
            <person name="Yuan L."/>
            <person name="Cao M."/>
            <person name="McDermott J."/>
            <person name="Samudrala R."/>
            <person name="Wang J."/>
            <person name="Wong G.K.-S."/>
            <person name="Yang H."/>
        </authorList>
    </citation>
    <scope>NUCLEOTIDE SEQUENCE [LARGE SCALE GENOMIC DNA]</scope>
    <source>
        <strain>cv. Nipponbare</strain>
    </source>
</reference>
<reference key="5">
    <citation type="journal article" date="2003" name="Science">
        <title>Collection, mapping, and annotation of over 28,000 cDNA clones from japonica rice.</title>
        <authorList>
            <consortium name="The rice full-length cDNA consortium"/>
        </authorList>
    </citation>
    <scope>NUCLEOTIDE SEQUENCE [LARGE SCALE MRNA]</scope>
    <source>
        <strain>cv. Nipponbare</strain>
    </source>
</reference>
<reference key="6">
    <citation type="journal article" date="2006" name="BMC Plant Biol.">
        <title>Analysis of rice glycosyl hydrolase family 1 and expression of Os4bglu12 beta-glucosidase.</title>
        <authorList>
            <person name="Opassiri R."/>
            <person name="Pomthong B."/>
            <person name="Onkoksoong T."/>
            <person name="Akiyama T."/>
            <person name="Esen A."/>
            <person name="Ketudat Cairns J.R."/>
        </authorList>
    </citation>
    <scope>GENE FAMILY</scope>
    <scope>NOMENCLATURE</scope>
</reference>
<feature type="signal peptide" evidence="6">
    <location>
        <begin position="1"/>
        <end position="22"/>
    </location>
</feature>
<feature type="chain" id="PRO_0000390348" description="Beta-glucosidase 31">
    <location>
        <begin position="23"/>
        <end position="523"/>
    </location>
</feature>
<feature type="active site" description="Proton donor" evidence="3">
    <location>
        <position position="195"/>
    </location>
</feature>
<feature type="active site" description="Nucleophile" evidence="3">
    <location>
        <position position="413"/>
    </location>
</feature>
<feature type="binding site" evidence="3">
    <location>
        <position position="49"/>
    </location>
    <ligand>
        <name>a beta-D-glucoside</name>
        <dbReference type="ChEBI" id="CHEBI:22798"/>
    </ligand>
</feature>
<feature type="binding site" evidence="3">
    <location>
        <position position="149"/>
    </location>
    <ligand>
        <name>a beta-D-glucoside</name>
        <dbReference type="ChEBI" id="CHEBI:22798"/>
    </ligand>
</feature>
<feature type="binding site" evidence="3">
    <location>
        <begin position="194"/>
        <end position="195"/>
    </location>
    <ligand>
        <name>a beta-D-glucoside</name>
        <dbReference type="ChEBI" id="CHEBI:22798"/>
    </ligand>
</feature>
<feature type="binding site" evidence="3">
    <location>
        <position position="339"/>
    </location>
    <ligand>
        <name>a beta-D-glucoside</name>
        <dbReference type="ChEBI" id="CHEBI:22798"/>
    </ligand>
</feature>
<feature type="binding site" evidence="5">
    <location>
        <position position="413"/>
    </location>
    <ligand>
        <name>a beta-D-glucoside</name>
        <dbReference type="ChEBI" id="CHEBI:22798"/>
    </ligand>
</feature>
<feature type="binding site" evidence="3">
    <location>
        <position position="460"/>
    </location>
    <ligand>
        <name>a beta-D-glucoside</name>
        <dbReference type="ChEBI" id="CHEBI:22798"/>
    </ligand>
</feature>
<feature type="binding site" evidence="4">
    <location>
        <begin position="467"/>
        <end position="468"/>
    </location>
    <ligand>
        <name>a beta-D-glucoside</name>
        <dbReference type="ChEBI" id="CHEBI:22798"/>
    </ligand>
</feature>
<feature type="binding site" evidence="1">
    <location>
        <position position="476"/>
    </location>
    <ligand>
        <name>a beta-D-glucoside</name>
        <dbReference type="ChEBI" id="CHEBI:22798"/>
    </ligand>
</feature>
<feature type="glycosylation site" description="N-linked (GlcNAc...) asparagine" evidence="7">
    <location>
        <position position="227"/>
    </location>
</feature>
<feature type="glycosylation site" description="N-linked (GlcNAc...) asparagine" evidence="7">
    <location>
        <position position="450"/>
    </location>
</feature>
<feature type="disulfide bond" evidence="3">
    <location>
        <begin position="214"/>
        <end position="223"/>
    </location>
</feature>
<keyword id="KW-1015">Disulfide bond</keyword>
<keyword id="KW-0325">Glycoprotein</keyword>
<keyword id="KW-0326">Glycosidase</keyword>
<keyword id="KW-0378">Hydrolase</keyword>
<keyword id="KW-1185">Reference proteome</keyword>
<keyword id="KW-0732">Signal</keyword>
<comment type="catalytic activity">
    <reaction evidence="2">
        <text>Hydrolysis of terminal, non-reducing beta-D-glucosyl residues with release of beta-D-glucose.</text>
        <dbReference type="EC" id="3.2.1.21"/>
    </reaction>
</comment>
<comment type="similarity">
    <text evidence="8">Belongs to the glycosyl hydrolase 1 family.</text>
</comment>
<comment type="sequence caution" evidence="8">
    <conflict type="erroneous gene model prediction">
        <sequence resource="EMBL-CDS" id="BAF25552"/>
    </conflict>
</comment>
<dbReference type="EC" id="3.2.1.21" evidence="2"/>
<dbReference type="EMBL" id="AP008215">
    <property type="protein sequence ID" value="BAF25552.1"/>
    <property type="status" value="ALT_SEQ"/>
    <property type="molecule type" value="Genomic_DNA"/>
</dbReference>
<dbReference type="EMBL" id="AP014965">
    <property type="status" value="NOT_ANNOTATED_CDS"/>
    <property type="molecule type" value="Genomic_DNA"/>
</dbReference>
<dbReference type="EMBL" id="CM000146">
    <property type="protein sequence ID" value="EEE70032.1"/>
    <property type="molecule type" value="Genomic_DNA"/>
</dbReference>
<dbReference type="EMBL" id="AK121679">
    <property type="protein sequence ID" value="BAH00605.1"/>
    <property type="molecule type" value="mRNA"/>
</dbReference>
<dbReference type="RefSeq" id="XP_015612357.1">
    <property type="nucleotide sequence ID" value="XM_015756871.1"/>
</dbReference>
<dbReference type="SMR" id="B7F7K7"/>
<dbReference type="FunCoup" id="B7F7K7">
    <property type="interactions" value="176"/>
</dbReference>
<dbReference type="STRING" id="39947.B7F7K7"/>
<dbReference type="CAZy" id="GH1">
    <property type="family name" value="Glycoside Hydrolase Family 1"/>
</dbReference>
<dbReference type="GlyCosmos" id="B7F7K7">
    <property type="glycosylation" value="2 sites, No reported glycans"/>
</dbReference>
<dbReference type="PaxDb" id="39947-B7F7K7"/>
<dbReference type="KEGG" id="dosa:Os09g0511600"/>
<dbReference type="eggNOG" id="KOG0626">
    <property type="taxonomic scope" value="Eukaryota"/>
</dbReference>
<dbReference type="HOGENOM" id="CLU_001859_1_0_1"/>
<dbReference type="InParanoid" id="B7F7K7"/>
<dbReference type="OrthoDB" id="65569at2759"/>
<dbReference type="Proteomes" id="UP000000763">
    <property type="component" value="Chromosome 9"/>
</dbReference>
<dbReference type="Proteomes" id="UP000007752">
    <property type="component" value="Chromosome 9"/>
</dbReference>
<dbReference type="Proteomes" id="UP000059680">
    <property type="component" value="Chromosome 9"/>
</dbReference>
<dbReference type="GO" id="GO:0033907">
    <property type="term" value="F:beta-D-fucosidase activity"/>
    <property type="evidence" value="ECO:0007669"/>
    <property type="project" value="UniProtKB-ARBA"/>
</dbReference>
<dbReference type="GO" id="GO:0004565">
    <property type="term" value="F:beta-galactosidase activity"/>
    <property type="evidence" value="ECO:0007669"/>
    <property type="project" value="UniProtKB-ARBA"/>
</dbReference>
<dbReference type="GO" id="GO:0008422">
    <property type="term" value="F:beta-glucosidase activity"/>
    <property type="evidence" value="ECO:0000318"/>
    <property type="project" value="GO_Central"/>
</dbReference>
<dbReference type="GO" id="GO:0005975">
    <property type="term" value="P:carbohydrate metabolic process"/>
    <property type="evidence" value="ECO:0007669"/>
    <property type="project" value="InterPro"/>
</dbReference>
<dbReference type="FunFam" id="3.20.20.80:FF:000022">
    <property type="entry name" value="Beta-glucosidase 11"/>
    <property type="match status" value="1"/>
</dbReference>
<dbReference type="Gene3D" id="3.20.20.80">
    <property type="entry name" value="Glycosidases"/>
    <property type="match status" value="1"/>
</dbReference>
<dbReference type="InterPro" id="IPR001360">
    <property type="entry name" value="Glyco_hydro_1"/>
</dbReference>
<dbReference type="InterPro" id="IPR033132">
    <property type="entry name" value="Glyco_hydro_1_N_CS"/>
</dbReference>
<dbReference type="InterPro" id="IPR017853">
    <property type="entry name" value="Glycoside_hydrolase_SF"/>
</dbReference>
<dbReference type="PANTHER" id="PTHR10353:SF317">
    <property type="entry name" value="BETA-GLUCOSIDASE 31"/>
    <property type="match status" value="1"/>
</dbReference>
<dbReference type="PANTHER" id="PTHR10353">
    <property type="entry name" value="GLYCOSYL HYDROLASE"/>
    <property type="match status" value="1"/>
</dbReference>
<dbReference type="Pfam" id="PF00232">
    <property type="entry name" value="Glyco_hydro_1"/>
    <property type="match status" value="1"/>
</dbReference>
<dbReference type="PRINTS" id="PR00131">
    <property type="entry name" value="GLHYDRLASE1"/>
</dbReference>
<dbReference type="SUPFAM" id="SSF51445">
    <property type="entry name" value="(Trans)glycosidases"/>
    <property type="match status" value="1"/>
</dbReference>
<dbReference type="PROSITE" id="PS00653">
    <property type="entry name" value="GLYCOSYL_HYDROL_F1_2"/>
    <property type="match status" value="1"/>
</dbReference>
<sequence>MTPARVVFICCVVLLAAAAAAASSSTAAGITRADFPPEFIFGAGSSAYQVEGAFAEDGRKPSIWDTFSHSGYSVDGATGDVTADQYHKYKEDVKLLQDMGVDAYRMSISWSRLIPDGRGAVNPKGLEYYNNLIDELLSHGIQPHVTIYHFDFPQALQDEYNGILSPRFVEDFTAYADVCFKNFGDRVKHWSTVNEPNIEPIGGYDQGILPPRRCSFPFGVLSCDNGNSTTEPYIVAHHLLLAHSSAVSLYREKYQATQGGQIGLTLLGWWYEPGTQDPEDVAAAARMNDFHIGWYMHPLVYGDYPPVMRKNVGSRLPSFTAEESKRVLESYDFVGFNHYVAIFVRADLSKLDQSLRDYMGDAAVKYDLPFLKSNNEFPLGLTSDFMTSTPWALKKMLNHLQEKYKNPIVMIHENGAAGQPDPSGGNTYDDDFRSQYLQDYIEATLQSIRNGSNVQGYFVWSFLDVFEYLFGYRLRFGLYGVDFASPERTRYQRHSARWYAGFLRGGELRPAAAALAGGGAYSQ</sequence>
<accession>B7F7K7</accession>
<accession>Q0J0G3</accession>
<protein>
    <recommendedName>
        <fullName>Beta-glucosidase 31</fullName>
        <shortName>Os9bglu31</shortName>
        <ecNumber evidence="2">3.2.1.21</ecNumber>
    </recommendedName>
</protein>
<gene>
    <name type="primary">BGLU31</name>
    <name type="ordered locus">Os09g0511600</name>
    <name type="ordered locus">LOC_Os09g33680</name>
    <name type="ORF">OsJ_29984</name>
</gene>